<keyword id="KW-0031">Aminopeptidase</keyword>
<keyword id="KW-0963">Cytoplasm</keyword>
<keyword id="KW-0378">Hydrolase</keyword>
<keyword id="KW-0479">Metal-binding</keyword>
<keyword id="KW-0482">Metalloprotease</keyword>
<keyword id="KW-0645">Protease</keyword>
<keyword id="KW-0862">Zinc</keyword>
<evidence type="ECO:0000250" key="1"/>
<evidence type="ECO:0000255" key="2">
    <source>
        <dbReference type="PROSITE-ProRule" id="PRU10095"/>
    </source>
</evidence>
<evidence type="ECO:0000305" key="3"/>
<name>AMPN_LACDL</name>
<sequence length="843" mass="95348">MAVKRFYETFHPDHYDLYIDVDRAARSFSGTSTIHGEIQEETVLVHQKYMTISKVTVDGKEVPFTFGDDFEGIKIEAGKTGEAVIAIDYSAPLTDTMMGIYPSYYQVDGVKKELIGTQFETTFAREAFPCVDEPEAKATFSLALKFDEHEGETVLANMPEDRVENGVHYFKETVRMSSYLVAFAFGEMRSLTTHTKSGVLIGVYSTQAHTEKELTFSLDIAKRAIEFYEDFYQTPYPLPQSLQLALPDFSAGAMENWGLVTYREAYLLLDPDNTTLEMKKLVATVVTHELAHQWFGDLVTMEWWDNLWLNESFANMMEYLSVDHLEPNWHIWEMFQTSEAAAALTRDATDGVQSVHVEVNDPAEIDALFDGAIVYAKGSRMLVMVRSLLGDEALRKGLKRYFDKHKFGNAAGDDLWDALSTATDLNIGEIMHTWLDQPGYPVVNAFVEDGHLKLTQKQFFIGEGKEVGRKWEIPLNANFKAPKIMSDVELDLGDYQALRAEAGHALRLNVGNNSHFIVKYDQTLMDDIMKEAKDLDPVSQLQLLQDLRLLAEGKQASYADVVPVLELFKNSESHIVNDALYTTADKLRQFAPAGSEADKNLRALYNDLSKDQVARLGWLPKAGESDEDIQTRPYVLSASLYGRNADSEKQAHEIYVEYADKLAELSADIRPYVLINEVENYGSSELTDKLIGLYQATSDPSFKMDLEAAIVKSKDEGELKKIVSWFKNAEIVKPQDLRGWFSGVLSNPAGEQLAWDWIRDEWAWLEKTVGGDMEFATFITVISRVFKTKERYDEYNAFFTDKESNMLLNREIKMDRKVIANRVDLIASEQADVNAAVAAALQK</sequence>
<reference key="1">
    <citation type="journal article" date="1993" name="Eur. J. Biochem.">
        <title>Cloning, DNA sequence analysis and partial characterization of pepN, a lysyl aminopeptidase from Lactobacillus delbruckii ssp. lactis DSM7290.</title>
        <authorList>
            <person name="Klein J.R."/>
            <person name="Klein U."/>
            <person name="Schad M."/>
            <person name="Plapp R."/>
        </authorList>
    </citation>
    <scope>NUCLEOTIDE SEQUENCE [GENOMIC DNA]</scope>
    <source>
        <strain>DSM 7290</strain>
    </source>
</reference>
<accession>P37896</accession>
<protein>
    <recommendedName>
        <fullName>Aminopeptidase N</fullName>
        <ecNumber>3.4.11.2</ecNumber>
    </recommendedName>
    <alternativeName>
        <fullName>Alanine aminopeptidase</fullName>
    </alternativeName>
    <alternativeName>
        <fullName>Lysyl aminopeptidase</fullName>
        <shortName>Lys-AP</shortName>
    </alternativeName>
</protein>
<feature type="initiator methionine" description="Removed" evidence="1">
    <location>
        <position position="1"/>
    </location>
</feature>
<feature type="chain" id="PRO_0000095071" description="Aminopeptidase N">
    <location>
        <begin position="2"/>
        <end position="843"/>
    </location>
</feature>
<feature type="active site" description="Proton acceptor" evidence="2">
    <location>
        <position position="289"/>
    </location>
</feature>
<feature type="binding site" evidence="1">
    <location>
        <position position="120"/>
    </location>
    <ligand>
        <name>substrate</name>
    </ligand>
</feature>
<feature type="binding site" evidence="1">
    <location>
        <begin position="252"/>
        <end position="256"/>
    </location>
    <ligand>
        <name>substrate</name>
    </ligand>
</feature>
<feature type="binding site" evidence="2">
    <location>
        <position position="288"/>
    </location>
    <ligand>
        <name>Zn(2+)</name>
        <dbReference type="ChEBI" id="CHEBI:29105"/>
        <note>catalytic</note>
    </ligand>
</feature>
<feature type="binding site" evidence="2">
    <location>
        <position position="292"/>
    </location>
    <ligand>
        <name>Zn(2+)</name>
        <dbReference type="ChEBI" id="CHEBI:29105"/>
        <note>catalytic</note>
    </ligand>
</feature>
<feature type="binding site" evidence="2">
    <location>
        <position position="311"/>
    </location>
    <ligand>
        <name>Zn(2+)</name>
        <dbReference type="ChEBI" id="CHEBI:29105"/>
        <note>catalytic</note>
    </ligand>
</feature>
<feature type="site" description="Transition state stabilizer" evidence="1">
    <location>
        <position position="375"/>
    </location>
</feature>
<gene>
    <name type="primary">pepN</name>
</gene>
<dbReference type="EC" id="3.4.11.2"/>
<dbReference type="EMBL" id="Z21701">
    <property type="protein sequence ID" value="CAA79805.1"/>
    <property type="molecule type" value="Genomic_DNA"/>
</dbReference>
<dbReference type="PIR" id="S38364">
    <property type="entry name" value="S38364"/>
</dbReference>
<dbReference type="RefSeq" id="WP_138490927.1">
    <property type="nucleotide sequence ID" value="NZ_CP046131.1"/>
</dbReference>
<dbReference type="SMR" id="P37896"/>
<dbReference type="MEROPS" id="M01.002"/>
<dbReference type="GO" id="GO:0005737">
    <property type="term" value="C:cytoplasm"/>
    <property type="evidence" value="ECO:0007669"/>
    <property type="project" value="UniProtKB-SubCell"/>
</dbReference>
<dbReference type="GO" id="GO:0005615">
    <property type="term" value="C:extracellular space"/>
    <property type="evidence" value="ECO:0007669"/>
    <property type="project" value="TreeGrafter"/>
</dbReference>
<dbReference type="GO" id="GO:0016020">
    <property type="term" value="C:membrane"/>
    <property type="evidence" value="ECO:0007669"/>
    <property type="project" value="TreeGrafter"/>
</dbReference>
<dbReference type="GO" id="GO:0016285">
    <property type="term" value="F:alanyl aminopeptidase activity"/>
    <property type="evidence" value="ECO:0007669"/>
    <property type="project" value="UniProtKB-EC"/>
</dbReference>
<dbReference type="GO" id="GO:0070006">
    <property type="term" value="F:metalloaminopeptidase activity"/>
    <property type="evidence" value="ECO:0007669"/>
    <property type="project" value="TreeGrafter"/>
</dbReference>
<dbReference type="GO" id="GO:0042277">
    <property type="term" value="F:peptide binding"/>
    <property type="evidence" value="ECO:0007669"/>
    <property type="project" value="TreeGrafter"/>
</dbReference>
<dbReference type="GO" id="GO:0008270">
    <property type="term" value="F:zinc ion binding"/>
    <property type="evidence" value="ECO:0007669"/>
    <property type="project" value="InterPro"/>
</dbReference>
<dbReference type="GO" id="GO:0043171">
    <property type="term" value="P:peptide catabolic process"/>
    <property type="evidence" value="ECO:0007669"/>
    <property type="project" value="TreeGrafter"/>
</dbReference>
<dbReference type="GO" id="GO:0006508">
    <property type="term" value="P:proteolysis"/>
    <property type="evidence" value="ECO:0007669"/>
    <property type="project" value="UniProtKB-KW"/>
</dbReference>
<dbReference type="CDD" id="cd09601">
    <property type="entry name" value="M1_APN-Q_like"/>
    <property type="match status" value="1"/>
</dbReference>
<dbReference type="FunFam" id="1.10.390.10:FF:000013">
    <property type="entry name" value="Aminopeptidase N"/>
    <property type="match status" value="1"/>
</dbReference>
<dbReference type="Gene3D" id="1.25.50.20">
    <property type="match status" value="1"/>
</dbReference>
<dbReference type="Gene3D" id="1.10.390.10">
    <property type="entry name" value="Neutral Protease Domain 2"/>
    <property type="match status" value="1"/>
</dbReference>
<dbReference type="Gene3D" id="2.60.40.1730">
    <property type="entry name" value="tricorn interacting facor f3 domain"/>
    <property type="match status" value="1"/>
</dbReference>
<dbReference type="InterPro" id="IPR045357">
    <property type="entry name" value="Aminopeptidase_N-like_N"/>
</dbReference>
<dbReference type="InterPro" id="IPR042097">
    <property type="entry name" value="Aminopeptidase_N-like_N_sf"/>
</dbReference>
<dbReference type="InterPro" id="IPR024571">
    <property type="entry name" value="ERAP1-like_C_dom"/>
</dbReference>
<dbReference type="InterPro" id="IPR034016">
    <property type="entry name" value="M1_APN-typ"/>
</dbReference>
<dbReference type="InterPro" id="IPR001930">
    <property type="entry name" value="Peptidase_M1"/>
</dbReference>
<dbReference type="InterPro" id="IPR050344">
    <property type="entry name" value="Peptidase_M1_aminopeptidases"/>
</dbReference>
<dbReference type="InterPro" id="IPR014782">
    <property type="entry name" value="Peptidase_M1_dom"/>
</dbReference>
<dbReference type="InterPro" id="IPR027268">
    <property type="entry name" value="Peptidase_M4/M1_CTD_sf"/>
</dbReference>
<dbReference type="PANTHER" id="PTHR11533">
    <property type="entry name" value="PROTEASE M1 ZINC METALLOPROTEASE"/>
    <property type="match status" value="1"/>
</dbReference>
<dbReference type="PANTHER" id="PTHR11533:SF174">
    <property type="entry name" value="PUROMYCIN-SENSITIVE AMINOPEPTIDASE-RELATED"/>
    <property type="match status" value="1"/>
</dbReference>
<dbReference type="Pfam" id="PF11838">
    <property type="entry name" value="ERAP1_C"/>
    <property type="match status" value="1"/>
</dbReference>
<dbReference type="Pfam" id="PF01433">
    <property type="entry name" value="Peptidase_M1"/>
    <property type="match status" value="1"/>
</dbReference>
<dbReference type="Pfam" id="PF17900">
    <property type="entry name" value="Peptidase_M1_N"/>
    <property type="match status" value="1"/>
</dbReference>
<dbReference type="PRINTS" id="PR00756">
    <property type="entry name" value="ALADIPTASE"/>
</dbReference>
<dbReference type="SUPFAM" id="SSF63737">
    <property type="entry name" value="Leukotriene A4 hydrolase N-terminal domain"/>
    <property type="match status" value="1"/>
</dbReference>
<dbReference type="SUPFAM" id="SSF55486">
    <property type="entry name" value="Metalloproteases ('zincins'), catalytic domain"/>
    <property type="match status" value="1"/>
</dbReference>
<dbReference type="PROSITE" id="PS00142">
    <property type="entry name" value="ZINC_PROTEASE"/>
    <property type="match status" value="1"/>
</dbReference>
<proteinExistence type="evidence at protein level"/>
<comment type="function">
    <text>Aminopeptidase with broad substrate specificity to several peptides.</text>
</comment>
<comment type="catalytic activity">
    <reaction>
        <text>Release of an N-terminal amino acid, Xaa-|-Yaa- from a peptide, amide or arylamide. Xaa is preferably Ala, but may be most amino acids including Pro (slow action). When a terminal hydrophobic residue is followed by a prolyl residue, the two may be released as an intact Xaa-Pro dipeptide.</text>
        <dbReference type="EC" id="3.4.11.2"/>
    </reaction>
</comment>
<comment type="cofactor">
    <cofactor evidence="1">
        <name>Zn(2+)</name>
        <dbReference type="ChEBI" id="CHEBI:29105"/>
    </cofactor>
    <text evidence="1">Binds 1 zinc ion per subunit.</text>
</comment>
<comment type="biophysicochemical properties">
    <phDependence>
        <text>Optimum pH is 6.5-7.0.</text>
    </phDependence>
    <temperatureDependence>
        <text>Optimum temperature is 54-55 degrees Celsius.</text>
    </temperatureDependence>
</comment>
<comment type="subunit">
    <text evidence="1">Monomer.</text>
</comment>
<comment type="subcellular location">
    <subcellularLocation>
        <location>Cytoplasm</location>
    </subcellularLocation>
    <text>It may be secreted through an unknown mechanism.</text>
</comment>
<comment type="similarity">
    <text evidence="3">Belongs to the peptidase M1 family.</text>
</comment>
<organism>
    <name type="scientific">Lactobacillus delbrueckii subsp. lactis</name>
    <dbReference type="NCBI Taxonomy" id="29397"/>
    <lineage>
        <taxon>Bacteria</taxon>
        <taxon>Bacillati</taxon>
        <taxon>Bacillota</taxon>
        <taxon>Bacilli</taxon>
        <taxon>Lactobacillales</taxon>
        <taxon>Lactobacillaceae</taxon>
        <taxon>Lactobacillus</taxon>
    </lineage>
</organism>